<organism>
    <name type="scientific">Macaca mulatta</name>
    <name type="common">Rhesus macaque</name>
    <dbReference type="NCBI Taxonomy" id="9544"/>
    <lineage>
        <taxon>Eukaryota</taxon>
        <taxon>Metazoa</taxon>
        <taxon>Chordata</taxon>
        <taxon>Craniata</taxon>
        <taxon>Vertebrata</taxon>
        <taxon>Euteleostomi</taxon>
        <taxon>Mammalia</taxon>
        <taxon>Eutheria</taxon>
        <taxon>Euarchontoglires</taxon>
        <taxon>Primates</taxon>
        <taxon>Haplorrhini</taxon>
        <taxon>Catarrhini</taxon>
        <taxon>Cercopithecidae</taxon>
        <taxon>Cercopithecinae</taxon>
        <taxon>Macaca</taxon>
    </lineage>
</organism>
<feature type="chain" id="PRO_0000127802" description="Cytidine monophosphate-N-acetylneuraminic acid hydroxylase">
    <location>
        <begin position="1"/>
        <end position="590"/>
    </location>
</feature>
<feature type="domain" description="Rieske" evidence="3">
    <location>
        <begin position="14"/>
        <end position="112"/>
    </location>
</feature>
<feature type="binding site" evidence="3">
    <location>
        <position position="54"/>
    </location>
    <ligand>
        <name>[2Fe-2S] cluster</name>
        <dbReference type="ChEBI" id="CHEBI:190135"/>
    </ligand>
</feature>
<feature type="binding site" evidence="3">
    <location>
        <position position="56"/>
    </location>
    <ligand>
        <name>[2Fe-2S] cluster</name>
        <dbReference type="ChEBI" id="CHEBI:190135"/>
    </ligand>
</feature>
<feature type="binding site" evidence="3">
    <location>
        <position position="75"/>
    </location>
    <ligand>
        <name>[2Fe-2S] cluster</name>
        <dbReference type="ChEBI" id="CHEBI:190135"/>
    </ligand>
</feature>
<feature type="binding site" evidence="3">
    <location>
        <position position="78"/>
    </location>
    <ligand>
        <name>[2Fe-2S] cluster</name>
        <dbReference type="ChEBI" id="CHEBI:190135"/>
    </ligand>
</feature>
<dbReference type="EC" id="1.14.18.2"/>
<dbReference type="EMBL" id="AB013814">
    <property type="protein sequence ID" value="BAA86057.1"/>
    <property type="molecule type" value="mRNA"/>
</dbReference>
<dbReference type="RefSeq" id="NP_001028028.2">
    <property type="nucleotide sequence ID" value="NM_001032856.2"/>
</dbReference>
<dbReference type="FunCoup" id="Q9TUJ2">
    <property type="interactions" value="255"/>
</dbReference>
<dbReference type="STRING" id="9544.ENSMMUP00000080655"/>
<dbReference type="PaxDb" id="9544-ENSMMUP00000007844"/>
<dbReference type="GeneID" id="574186"/>
<dbReference type="KEGG" id="mcc:574186"/>
<dbReference type="CTD" id="12763"/>
<dbReference type="eggNOG" id="ENOG502QR0M">
    <property type="taxonomic scope" value="Eukaryota"/>
</dbReference>
<dbReference type="InParanoid" id="Q9TUJ2"/>
<dbReference type="OrthoDB" id="332863at2759"/>
<dbReference type="UniPathway" id="UPA00628"/>
<dbReference type="Proteomes" id="UP000006718">
    <property type="component" value="Unassembled WGS sequence"/>
</dbReference>
<dbReference type="GO" id="GO:0005737">
    <property type="term" value="C:cytoplasm"/>
    <property type="evidence" value="ECO:0000318"/>
    <property type="project" value="GO_Central"/>
</dbReference>
<dbReference type="GO" id="GO:0051537">
    <property type="term" value="F:2 iron, 2 sulfur cluster binding"/>
    <property type="evidence" value="ECO:0007669"/>
    <property type="project" value="UniProtKB-KW"/>
</dbReference>
<dbReference type="GO" id="GO:0030338">
    <property type="term" value="F:CMP-N-acetylneuraminate monooxygenase activity"/>
    <property type="evidence" value="ECO:0000318"/>
    <property type="project" value="GO_Central"/>
</dbReference>
<dbReference type="GO" id="GO:0046872">
    <property type="term" value="F:metal ion binding"/>
    <property type="evidence" value="ECO:0007669"/>
    <property type="project" value="UniProtKB-KW"/>
</dbReference>
<dbReference type="GO" id="GO:0046381">
    <property type="term" value="P:CMP-N-acetylneuraminate metabolic process"/>
    <property type="evidence" value="ECO:0000318"/>
    <property type="project" value="GO_Central"/>
</dbReference>
<dbReference type="GO" id="GO:0006054">
    <property type="term" value="P:N-acetylneuraminate metabolic process"/>
    <property type="evidence" value="ECO:0007669"/>
    <property type="project" value="UniProtKB-UniPathway"/>
</dbReference>
<dbReference type="CDD" id="cd03473">
    <property type="entry name" value="Rieske_CMP_Neu5Ac_hydrolase_N"/>
    <property type="match status" value="1"/>
</dbReference>
<dbReference type="FunFam" id="3.60.15.10:FF:000025">
    <property type="entry name" value="Inactive cytidine monophosphate-N-acetylneuraminic acid hydroxylase"/>
    <property type="match status" value="1"/>
</dbReference>
<dbReference type="Gene3D" id="3.60.15.10">
    <property type="entry name" value="Ribonuclease Z/Hydroxyacylglutathione hydrolase-like"/>
    <property type="match status" value="1"/>
</dbReference>
<dbReference type="Gene3D" id="2.102.10.10">
    <property type="entry name" value="Rieske [2Fe-2S] iron-sulphur domain"/>
    <property type="match status" value="1"/>
</dbReference>
<dbReference type="InterPro" id="IPR037339">
    <property type="entry name" value="CMP-Neu5Ac_hydroxylase_Rieske"/>
</dbReference>
<dbReference type="InterPro" id="IPR027033">
    <property type="entry name" value="Cnh"/>
</dbReference>
<dbReference type="InterPro" id="IPR036866">
    <property type="entry name" value="RibonucZ/Hydroxyglut_hydro"/>
</dbReference>
<dbReference type="InterPro" id="IPR017941">
    <property type="entry name" value="Rieske_2Fe-2S"/>
</dbReference>
<dbReference type="InterPro" id="IPR036922">
    <property type="entry name" value="Rieske_2Fe-2S_sf"/>
</dbReference>
<dbReference type="PANTHER" id="PTHR46522">
    <property type="entry name" value="CYTIDINE MONOPHOSPHATE-N-ACETYLNEURAMINIC ACID HYDROXYLASE"/>
    <property type="match status" value="1"/>
</dbReference>
<dbReference type="PANTHER" id="PTHR46522:SF1">
    <property type="entry name" value="INACTIVE CYTIDINE MONOPHOSPHATE-N-ACETYLNEURAMINIC ACID HYDROXYLASE"/>
    <property type="match status" value="1"/>
</dbReference>
<dbReference type="Pfam" id="PF13483">
    <property type="entry name" value="Lactamase_B_3"/>
    <property type="match status" value="1"/>
</dbReference>
<dbReference type="Pfam" id="PF00355">
    <property type="entry name" value="Rieske"/>
    <property type="match status" value="1"/>
</dbReference>
<dbReference type="SUPFAM" id="SSF50022">
    <property type="entry name" value="ISP domain"/>
    <property type="match status" value="1"/>
</dbReference>
<dbReference type="SUPFAM" id="SSF56281">
    <property type="entry name" value="Metallo-hydrolase/oxidoreductase"/>
    <property type="match status" value="1"/>
</dbReference>
<dbReference type="PROSITE" id="PS51296">
    <property type="entry name" value="RIESKE"/>
    <property type="match status" value="1"/>
</dbReference>
<accession>Q9TUJ2</accession>
<proteinExistence type="evidence at transcript level"/>
<protein>
    <recommendedName>
        <fullName>Cytidine monophosphate-N-acetylneuraminic acid hydroxylase</fullName>
        <shortName>CMP-N-acetylneuraminic acid hydroxylase</shortName>
        <ecNumber>1.14.18.2</ecNumber>
    </recommendedName>
    <alternativeName>
        <fullName>CMP-N-acetylneuraminate monooxygenase</fullName>
    </alternativeName>
    <alternativeName>
        <fullName>CMP-Neu5Ac hydroxylase</fullName>
    </alternativeName>
    <alternativeName>
        <fullName>CMP-NeuAc hydroxylase</fullName>
    </alternativeName>
</protein>
<sequence>MGSTEQTTEILLCLSPVEVANLKEGINFFRNKSTGKDYILYKSKSRLRACKNVCKHQGGLFIKDIEDLAGRSVRCTKHNWKLDVSTMKYINPPESFCQDELVVEMDENNGLLLLELNPPNPWDSEPRSPEELDFGEVQITYLTHACMDLKLGDKRMVFDPWLIGPAFARGWWLLHEPPSDWLERLCQADLIYISHLHSDHLSYPTLKKLAGRRPDIPIYVGNTERPVFWNLNQSGVQLTNINVVPFGIWQQVDKNLRFMILMDGVHPEMDTCIIVEYKGHKILNTVDCTRPNGGRLPTKVALMMSDFAGGASGFPMTFSGGKFTEEWKAQFIKTERKKLLNYKAQLVKNLQPRIYCPFAGYFVESHPSDKYIKETNTKNDPNELNNLIKKNSDVITWTPRPGATLDLGRMLKDPTDSKGIIEPPEGTKIYKDSWDFEPYLEILNAAVGDEIFLHSSWIKEYFTWAGFKDYNLVVRMIETDEDFNPFPGGYDYLVDFLDLSFPKERPQREHPYEEIRSRVDVIRHVVKNGLLWDELYIGFQTRLQRDPDIYHHLFWNHFQIKLPLTPPNWRSFLTCCEQNGPGISQECKTT</sequence>
<gene>
    <name type="primary">CMAH</name>
</gene>
<comment type="function">
    <text evidence="2">Sialic acids are components of carbohydrate chains of glycoconjugates and are involved in cell-cell recognition and cell-pathogen interactions. Catalyzes the conversion of CMP-N-acetylneuraminic acid (CMP-Neu5Ac) into its hydroxylated derivative CMP-N-glycolylneuraminic acid (CMP-Neu5Gc), a sialic acid abundantly expressed at the surface of many cells.</text>
</comment>
<comment type="catalytic activity">
    <reaction>
        <text>CMP-N-acetyl-beta-neuraminate + 2 Fe(II)-[cytochrome b5] + O2 + 2 H(+) = CMP-N-glycoloyl-beta-neuraminate + 2 Fe(III)-[cytochrome b5] + H2O</text>
        <dbReference type="Rhea" id="RHEA:16145"/>
        <dbReference type="Rhea" id="RHEA-COMP:10438"/>
        <dbReference type="Rhea" id="RHEA-COMP:10439"/>
        <dbReference type="ChEBI" id="CHEBI:15377"/>
        <dbReference type="ChEBI" id="CHEBI:15378"/>
        <dbReference type="ChEBI" id="CHEBI:15379"/>
        <dbReference type="ChEBI" id="CHEBI:29033"/>
        <dbReference type="ChEBI" id="CHEBI:29034"/>
        <dbReference type="ChEBI" id="CHEBI:57812"/>
        <dbReference type="ChEBI" id="CHEBI:58376"/>
        <dbReference type="EC" id="1.14.18.2"/>
    </reaction>
</comment>
<comment type="cofactor">
    <cofactor evidence="3">
        <name>[2Fe-2S] cluster</name>
        <dbReference type="ChEBI" id="CHEBI:190135"/>
    </cofactor>
    <text evidence="3">Binds 1 [2Fe-2S] cluster per subunit.</text>
</comment>
<comment type="pathway">
    <text>Amino-sugar metabolism; N-acetylneuraminate metabolism.</text>
</comment>
<comment type="subcellular location">
    <subcellularLocation>
        <location evidence="1">Cytoplasm</location>
    </subcellularLocation>
</comment>
<comment type="similarity">
    <text evidence="4">Belongs to the CMP-Neu5Ac hydroxylase family.</text>
</comment>
<reference key="1">
    <citation type="submission" date="1998-05" db="EMBL/GenBank/DDBJ databases">
        <title>Molecular evolution of CMP-NeuAc hydoxylase in primates.</title>
        <authorList>
            <person name="Irie A."/>
            <person name="Suzuki A."/>
        </authorList>
    </citation>
    <scope>NUCLEOTIDE SEQUENCE [MRNA]</scope>
</reference>
<evidence type="ECO:0000250" key="1"/>
<evidence type="ECO:0000250" key="2">
    <source>
        <dbReference type="UniProtKB" id="Q61419"/>
    </source>
</evidence>
<evidence type="ECO:0000255" key="3">
    <source>
        <dbReference type="PROSITE-ProRule" id="PRU00628"/>
    </source>
</evidence>
<evidence type="ECO:0000305" key="4"/>
<keyword id="KW-0001">2Fe-2S</keyword>
<keyword id="KW-0963">Cytoplasm</keyword>
<keyword id="KW-0249">Electron transport</keyword>
<keyword id="KW-0408">Iron</keyword>
<keyword id="KW-0411">Iron-sulfur</keyword>
<keyword id="KW-0479">Metal-binding</keyword>
<keyword id="KW-0560">Oxidoreductase</keyword>
<keyword id="KW-1185">Reference proteome</keyword>
<keyword id="KW-0813">Transport</keyword>
<name>CMAH_MACMU</name>